<gene>
    <name evidence="2" type="primary">infB</name>
    <name type="ordered locus">NGK_1503</name>
</gene>
<organism>
    <name type="scientific">Neisseria gonorrhoeae (strain NCCP11945)</name>
    <dbReference type="NCBI Taxonomy" id="521006"/>
    <lineage>
        <taxon>Bacteria</taxon>
        <taxon>Pseudomonadati</taxon>
        <taxon>Pseudomonadota</taxon>
        <taxon>Betaproteobacteria</taxon>
        <taxon>Neisseriales</taxon>
        <taxon>Neisseriaceae</taxon>
        <taxon>Neisseria</taxon>
    </lineage>
</organism>
<comment type="function">
    <text evidence="2">One of the essential components for the initiation of protein synthesis. Protects formylmethionyl-tRNA from spontaneous hydrolysis and promotes its binding to the 30S ribosomal subunits. Also involved in the hydrolysis of GTP during the formation of the 70S ribosomal complex.</text>
</comment>
<comment type="subcellular location">
    <subcellularLocation>
        <location evidence="2">Cytoplasm</location>
    </subcellularLocation>
</comment>
<comment type="similarity">
    <text evidence="2">Belongs to the TRAFAC class translation factor GTPase superfamily. Classic translation factor GTPase family. IF-2 subfamily.</text>
</comment>
<evidence type="ECO:0000250" key="1"/>
<evidence type="ECO:0000255" key="2">
    <source>
        <dbReference type="HAMAP-Rule" id="MF_00100"/>
    </source>
</evidence>
<evidence type="ECO:0000256" key="3">
    <source>
        <dbReference type="SAM" id="MobiDB-lite"/>
    </source>
</evidence>
<feature type="chain" id="PRO_1000093807" description="Translation initiation factor IF-2">
    <location>
        <begin position="1"/>
        <end position="943"/>
    </location>
</feature>
<feature type="domain" description="tr-type G">
    <location>
        <begin position="443"/>
        <end position="612"/>
    </location>
</feature>
<feature type="region of interest" description="Disordered" evidence="3">
    <location>
        <begin position="99"/>
        <end position="354"/>
    </location>
</feature>
<feature type="region of interest" description="G1" evidence="1">
    <location>
        <begin position="452"/>
        <end position="459"/>
    </location>
</feature>
<feature type="region of interest" description="G2" evidence="1">
    <location>
        <begin position="477"/>
        <end position="481"/>
    </location>
</feature>
<feature type="region of interest" description="G3" evidence="1">
    <location>
        <begin position="498"/>
        <end position="501"/>
    </location>
</feature>
<feature type="region of interest" description="G4" evidence="1">
    <location>
        <begin position="552"/>
        <end position="555"/>
    </location>
</feature>
<feature type="region of interest" description="G5" evidence="1">
    <location>
        <begin position="588"/>
        <end position="590"/>
    </location>
</feature>
<feature type="compositionally biased region" description="Low complexity" evidence="3">
    <location>
        <begin position="99"/>
        <end position="113"/>
    </location>
</feature>
<feature type="compositionally biased region" description="Basic and acidic residues" evidence="3">
    <location>
        <begin position="117"/>
        <end position="141"/>
    </location>
</feature>
<feature type="compositionally biased region" description="Low complexity" evidence="3">
    <location>
        <begin position="145"/>
        <end position="172"/>
    </location>
</feature>
<feature type="compositionally biased region" description="Basic and acidic residues" evidence="3">
    <location>
        <begin position="173"/>
        <end position="197"/>
    </location>
</feature>
<feature type="compositionally biased region" description="Low complexity" evidence="3">
    <location>
        <begin position="200"/>
        <end position="215"/>
    </location>
</feature>
<feature type="compositionally biased region" description="Basic and acidic residues" evidence="3">
    <location>
        <begin position="216"/>
        <end position="250"/>
    </location>
</feature>
<feature type="compositionally biased region" description="Low complexity" evidence="3">
    <location>
        <begin position="251"/>
        <end position="264"/>
    </location>
</feature>
<feature type="compositionally biased region" description="Basic and acidic residues" evidence="3">
    <location>
        <begin position="295"/>
        <end position="308"/>
    </location>
</feature>
<feature type="compositionally biased region" description="Basic and acidic residues" evidence="3">
    <location>
        <begin position="319"/>
        <end position="335"/>
    </location>
</feature>
<feature type="binding site" evidence="2">
    <location>
        <begin position="452"/>
        <end position="459"/>
    </location>
    <ligand>
        <name>GTP</name>
        <dbReference type="ChEBI" id="CHEBI:37565"/>
    </ligand>
</feature>
<feature type="binding site" evidence="2">
    <location>
        <begin position="498"/>
        <end position="502"/>
    </location>
    <ligand>
        <name>GTP</name>
        <dbReference type="ChEBI" id="CHEBI:37565"/>
    </ligand>
</feature>
<feature type="binding site" evidence="2">
    <location>
        <begin position="552"/>
        <end position="555"/>
    </location>
    <ligand>
        <name>GTP</name>
        <dbReference type="ChEBI" id="CHEBI:37565"/>
    </ligand>
</feature>
<sequence>MSNTTVEQFAAELKRPVEDLLKQLKEAGVSKNSGSDSLTLDDKQLLNAYLTKKNGSNGGTISIRRTKTEVSTVDGVKVETRKRGRTVNIPSAEELAAQVKAAQTQAAPVQPEQTAEDAVKARAEAAARAEARAKAEAEAAKLKAAKAGNKAKPAAQKPTEAKAETAPVAAETKPAEPKEKAVKPKHERNGKGKDAKKPAKPAAPAVPQPVVSAEEQAQRDEEARRAAALRAHQEALLKEKQERQARREAMKQQAEQQAKAAQEAKTGRQRPAKPAEKPQAAAPAVENKPVNPAKAKKEDRRNRDDEGQGRNAKGKGAKGGRDRNNARNGGDERVRGGKKGKKLKLEPNQHAFQAPTEPVVHEVLVPETITVADLAHKMAVKGVEVVKALMKMGMMVTINQSIDQDTALIVVEELGHIGKPAAADDPEAFLGEGAEAVEAEALPRPPVVTVMGHVDHGKTSLLDYIRRAKVVQGEAGGITQHIGAYHVKTPRGVITFLDTPGHEAFTAMRARGAKATDIVILVVAADDGVMPQTIEAIAHAKAAGVPIVVAVNKIDKDTANPERIRQELTQHEVIPDDWGGTVQFIDVSAKKGTNIDALLEAVLLEAEVLELTAPVDAPAKGIIVEARLDKGRGAVATLLVQNGTLKKGDMLLAGTAFGKIRAMVDENGKSITEAGPSIPVEILGLSDVPNAGEDAMVLADEKKAREIALFRQGKYRDVRLAKQQAAKLENMFNNMGETQAQSLSVIIKADVQGSYEALAGSLKKLSADEVKVNVLHSGVGGITESDVNLAIASGAFIIGFNVRADASSRKLAENENVEIRYYNIIYDAIDDVKAAMSGMLSPEKKEQVTGTVEIRQVISVSKVGNIAGCMVTDGVVKRDSHIRLIRNNVVIHTGELASLKRYKDDVKEVRMGFECGLMLKGYNEIMEGDQLECFDIVEVARTL</sequence>
<accession>B4RMZ3</accession>
<keyword id="KW-0963">Cytoplasm</keyword>
<keyword id="KW-0342">GTP-binding</keyword>
<keyword id="KW-0396">Initiation factor</keyword>
<keyword id="KW-0547">Nucleotide-binding</keyword>
<keyword id="KW-0648">Protein biosynthesis</keyword>
<reference key="1">
    <citation type="journal article" date="2008" name="J. Bacteriol.">
        <title>Complete genome sequence of Neisseria gonorrhoeae NCCP11945.</title>
        <authorList>
            <person name="Chung G.T."/>
            <person name="Yoo J.S."/>
            <person name="Oh H.B."/>
            <person name="Lee Y.S."/>
            <person name="Cha S.H."/>
            <person name="Kim S.J."/>
            <person name="Yoo C.K."/>
        </authorList>
    </citation>
    <scope>NUCLEOTIDE SEQUENCE [LARGE SCALE GENOMIC DNA]</scope>
    <source>
        <strain>NCCP11945</strain>
    </source>
</reference>
<proteinExistence type="inferred from homology"/>
<name>IF2_NEIG2</name>
<protein>
    <recommendedName>
        <fullName evidence="2">Translation initiation factor IF-2</fullName>
    </recommendedName>
</protein>
<dbReference type="EMBL" id="CP001050">
    <property type="protein sequence ID" value="ACF30161.1"/>
    <property type="molecule type" value="Genomic_DNA"/>
</dbReference>
<dbReference type="RefSeq" id="WP_003697298.1">
    <property type="nucleotide sequence ID" value="NC_011035.1"/>
</dbReference>
<dbReference type="SMR" id="B4RMZ3"/>
<dbReference type="GeneID" id="66753485"/>
<dbReference type="KEGG" id="ngk:NGK_1503"/>
<dbReference type="HOGENOM" id="CLU_006301_6_0_4"/>
<dbReference type="Proteomes" id="UP000002564">
    <property type="component" value="Chromosome"/>
</dbReference>
<dbReference type="GO" id="GO:0005829">
    <property type="term" value="C:cytosol"/>
    <property type="evidence" value="ECO:0007669"/>
    <property type="project" value="TreeGrafter"/>
</dbReference>
<dbReference type="GO" id="GO:0005525">
    <property type="term" value="F:GTP binding"/>
    <property type="evidence" value="ECO:0007669"/>
    <property type="project" value="UniProtKB-KW"/>
</dbReference>
<dbReference type="GO" id="GO:0003924">
    <property type="term" value="F:GTPase activity"/>
    <property type="evidence" value="ECO:0007669"/>
    <property type="project" value="UniProtKB-UniRule"/>
</dbReference>
<dbReference type="GO" id="GO:0003743">
    <property type="term" value="F:translation initiation factor activity"/>
    <property type="evidence" value="ECO:0007669"/>
    <property type="project" value="UniProtKB-UniRule"/>
</dbReference>
<dbReference type="CDD" id="cd01887">
    <property type="entry name" value="IF2_eIF5B"/>
    <property type="match status" value="1"/>
</dbReference>
<dbReference type="CDD" id="cd03702">
    <property type="entry name" value="IF2_mtIF2_II"/>
    <property type="match status" value="1"/>
</dbReference>
<dbReference type="CDD" id="cd03692">
    <property type="entry name" value="mtIF2_IVc"/>
    <property type="match status" value="1"/>
</dbReference>
<dbReference type="FunFam" id="2.40.30.10:FF:000007">
    <property type="entry name" value="Translation initiation factor IF-2"/>
    <property type="match status" value="1"/>
</dbReference>
<dbReference type="FunFam" id="2.40.30.10:FF:000008">
    <property type="entry name" value="Translation initiation factor IF-2"/>
    <property type="match status" value="1"/>
</dbReference>
<dbReference type="FunFam" id="3.40.50.10050:FF:000001">
    <property type="entry name" value="Translation initiation factor IF-2"/>
    <property type="match status" value="1"/>
</dbReference>
<dbReference type="FunFam" id="3.40.50.300:FF:000019">
    <property type="entry name" value="Translation initiation factor IF-2"/>
    <property type="match status" value="1"/>
</dbReference>
<dbReference type="Gene3D" id="3.40.50.300">
    <property type="entry name" value="P-loop containing nucleotide triphosphate hydrolases"/>
    <property type="match status" value="1"/>
</dbReference>
<dbReference type="Gene3D" id="3.30.56.50">
    <property type="entry name" value="Putative DNA-binding domain, N-terminal subdomain of bacterial translation initiation factor IF2"/>
    <property type="match status" value="1"/>
</dbReference>
<dbReference type="Gene3D" id="2.40.30.10">
    <property type="entry name" value="Translation factors"/>
    <property type="match status" value="2"/>
</dbReference>
<dbReference type="Gene3D" id="3.40.50.10050">
    <property type="entry name" value="Translation initiation factor IF- 2, domain 3"/>
    <property type="match status" value="1"/>
</dbReference>
<dbReference type="HAMAP" id="MF_00100_B">
    <property type="entry name" value="IF_2_B"/>
    <property type="match status" value="1"/>
</dbReference>
<dbReference type="InterPro" id="IPR009061">
    <property type="entry name" value="DNA-bd_dom_put_sf"/>
</dbReference>
<dbReference type="InterPro" id="IPR053905">
    <property type="entry name" value="EF-G-like_DII"/>
</dbReference>
<dbReference type="InterPro" id="IPR044145">
    <property type="entry name" value="IF2_II"/>
</dbReference>
<dbReference type="InterPro" id="IPR006847">
    <property type="entry name" value="IF2_N"/>
</dbReference>
<dbReference type="InterPro" id="IPR027417">
    <property type="entry name" value="P-loop_NTPase"/>
</dbReference>
<dbReference type="InterPro" id="IPR005225">
    <property type="entry name" value="Small_GTP-bd"/>
</dbReference>
<dbReference type="InterPro" id="IPR000795">
    <property type="entry name" value="T_Tr_GTP-bd_dom"/>
</dbReference>
<dbReference type="InterPro" id="IPR000178">
    <property type="entry name" value="TF_IF2_bacterial-like"/>
</dbReference>
<dbReference type="InterPro" id="IPR015760">
    <property type="entry name" value="TIF_IF2"/>
</dbReference>
<dbReference type="InterPro" id="IPR023115">
    <property type="entry name" value="TIF_IF2_dom3"/>
</dbReference>
<dbReference type="InterPro" id="IPR036925">
    <property type="entry name" value="TIF_IF2_dom3_sf"/>
</dbReference>
<dbReference type="InterPro" id="IPR009000">
    <property type="entry name" value="Transl_B-barrel_sf"/>
</dbReference>
<dbReference type="NCBIfam" id="TIGR00487">
    <property type="entry name" value="IF-2"/>
    <property type="match status" value="1"/>
</dbReference>
<dbReference type="NCBIfam" id="TIGR00231">
    <property type="entry name" value="small_GTP"/>
    <property type="match status" value="1"/>
</dbReference>
<dbReference type="PANTHER" id="PTHR43381:SF5">
    <property type="entry name" value="TR-TYPE G DOMAIN-CONTAINING PROTEIN"/>
    <property type="match status" value="1"/>
</dbReference>
<dbReference type="PANTHER" id="PTHR43381">
    <property type="entry name" value="TRANSLATION INITIATION FACTOR IF-2-RELATED"/>
    <property type="match status" value="1"/>
</dbReference>
<dbReference type="Pfam" id="PF22042">
    <property type="entry name" value="EF-G_D2"/>
    <property type="match status" value="1"/>
</dbReference>
<dbReference type="Pfam" id="PF00009">
    <property type="entry name" value="GTP_EFTU"/>
    <property type="match status" value="1"/>
</dbReference>
<dbReference type="Pfam" id="PF11987">
    <property type="entry name" value="IF-2"/>
    <property type="match status" value="1"/>
</dbReference>
<dbReference type="Pfam" id="PF04760">
    <property type="entry name" value="IF2_N"/>
    <property type="match status" value="2"/>
</dbReference>
<dbReference type="SUPFAM" id="SSF52156">
    <property type="entry name" value="Initiation factor IF2/eIF5b, domain 3"/>
    <property type="match status" value="1"/>
</dbReference>
<dbReference type="SUPFAM" id="SSF52540">
    <property type="entry name" value="P-loop containing nucleoside triphosphate hydrolases"/>
    <property type="match status" value="1"/>
</dbReference>
<dbReference type="SUPFAM" id="SSF46955">
    <property type="entry name" value="Putative DNA-binding domain"/>
    <property type="match status" value="1"/>
</dbReference>
<dbReference type="SUPFAM" id="SSF50447">
    <property type="entry name" value="Translation proteins"/>
    <property type="match status" value="2"/>
</dbReference>
<dbReference type="PROSITE" id="PS51722">
    <property type="entry name" value="G_TR_2"/>
    <property type="match status" value="1"/>
</dbReference>
<dbReference type="PROSITE" id="PS01176">
    <property type="entry name" value="IF2"/>
    <property type="match status" value="1"/>
</dbReference>